<accession>Q1LQB0</accession>
<protein>
    <recommendedName>
        <fullName evidence="1">Ribosomal RNA large subunit methyltransferase H</fullName>
        <ecNumber evidence="1">2.1.1.177</ecNumber>
    </recommendedName>
    <alternativeName>
        <fullName evidence="1">23S rRNA (pseudouridine1915-N3)-methyltransferase</fullName>
    </alternativeName>
    <alternativeName>
        <fullName evidence="1">23S rRNA m3Psi1915 methyltransferase</fullName>
    </alternativeName>
    <alternativeName>
        <fullName evidence="1">rRNA (pseudouridine-N3-)-methyltransferase RlmH</fullName>
    </alternativeName>
</protein>
<proteinExistence type="inferred from homology"/>
<reference key="1">
    <citation type="journal article" date="2010" name="PLoS ONE">
        <title>The complete genome sequence of Cupriavidus metallidurans strain CH34, a master survivalist in harsh and anthropogenic environments.</title>
        <authorList>
            <person name="Janssen P.J."/>
            <person name="Van Houdt R."/>
            <person name="Moors H."/>
            <person name="Monsieurs P."/>
            <person name="Morin N."/>
            <person name="Michaux A."/>
            <person name="Benotmane M.A."/>
            <person name="Leys N."/>
            <person name="Vallaeys T."/>
            <person name="Lapidus A."/>
            <person name="Monchy S."/>
            <person name="Medigue C."/>
            <person name="Taghavi S."/>
            <person name="McCorkle S."/>
            <person name="Dunn J."/>
            <person name="van der Lelie D."/>
            <person name="Mergeay M."/>
        </authorList>
    </citation>
    <scope>NUCLEOTIDE SEQUENCE [LARGE SCALE GENOMIC DNA]</scope>
    <source>
        <strain>ATCC 43123 / DSM 2839 / NBRC 102507 / CH34</strain>
    </source>
</reference>
<evidence type="ECO:0000255" key="1">
    <source>
        <dbReference type="HAMAP-Rule" id="MF_00658"/>
    </source>
</evidence>
<gene>
    <name evidence="1" type="primary">rlmH</name>
    <name type="ordered locus">Rmet_0780</name>
</gene>
<dbReference type="EC" id="2.1.1.177" evidence="1"/>
<dbReference type="EMBL" id="CP000352">
    <property type="protein sequence ID" value="ABF07666.1"/>
    <property type="molecule type" value="Genomic_DNA"/>
</dbReference>
<dbReference type="RefSeq" id="WP_011515620.1">
    <property type="nucleotide sequence ID" value="NC_007973.1"/>
</dbReference>
<dbReference type="SMR" id="Q1LQB0"/>
<dbReference type="STRING" id="266264.Rmet_0780"/>
<dbReference type="KEGG" id="rme:Rmet_0780"/>
<dbReference type="eggNOG" id="COG1576">
    <property type="taxonomic scope" value="Bacteria"/>
</dbReference>
<dbReference type="HOGENOM" id="CLU_100552_1_0_4"/>
<dbReference type="Proteomes" id="UP000002429">
    <property type="component" value="Chromosome"/>
</dbReference>
<dbReference type="GO" id="GO:0005737">
    <property type="term" value="C:cytoplasm"/>
    <property type="evidence" value="ECO:0007669"/>
    <property type="project" value="UniProtKB-SubCell"/>
</dbReference>
<dbReference type="GO" id="GO:0070038">
    <property type="term" value="F:rRNA (pseudouridine-N3-)-methyltransferase activity"/>
    <property type="evidence" value="ECO:0007669"/>
    <property type="project" value="UniProtKB-UniRule"/>
</dbReference>
<dbReference type="CDD" id="cd18081">
    <property type="entry name" value="RlmH-like"/>
    <property type="match status" value="1"/>
</dbReference>
<dbReference type="Gene3D" id="3.40.1280.10">
    <property type="match status" value="1"/>
</dbReference>
<dbReference type="HAMAP" id="MF_00658">
    <property type="entry name" value="23SrRNA_methyltr_H"/>
    <property type="match status" value="1"/>
</dbReference>
<dbReference type="InterPro" id="IPR029028">
    <property type="entry name" value="Alpha/beta_knot_MTases"/>
</dbReference>
<dbReference type="InterPro" id="IPR003742">
    <property type="entry name" value="RlmH-like"/>
</dbReference>
<dbReference type="InterPro" id="IPR029026">
    <property type="entry name" value="tRNA_m1G_MTases_N"/>
</dbReference>
<dbReference type="NCBIfam" id="NF000986">
    <property type="entry name" value="PRK00103.1-4"/>
    <property type="match status" value="1"/>
</dbReference>
<dbReference type="NCBIfam" id="TIGR00246">
    <property type="entry name" value="tRNA_RlmH_YbeA"/>
    <property type="match status" value="1"/>
</dbReference>
<dbReference type="PANTHER" id="PTHR33603">
    <property type="entry name" value="METHYLTRANSFERASE"/>
    <property type="match status" value="1"/>
</dbReference>
<dbReference type="PANTHER" id="PTHR33603:SF1">
    <property type="entry name" value="RIBOSOMAL RNA LARGE SUBUNIT METHYLTRANSFERASE H"/>
    <property type="match status" value="1"/>
</dbReference>
<dbReference type="Pfam" id="PF02590">
    <property type="entry name" value="SPOUT_MTase"/>
    <property type="match status" value="1"/>
</dbReference>
<dbReference type="PIRSF" id="PIRSF004505">
    <property type="entry name" value="MT_bac"/>
    <property type="match status" value="1"/>
</dbReference>
<dbReference type="SUPFAM" id="SSF75217">
    <property type="entry name" value="alpha/beta knot"/>
    <property type="match status" value="1"/>
</dbReference>
<feature type="chain" id="PRO_0000260592" description="Ribosomal RNA large subunit methyltransferase H">
    <location>
        <begin position="1"/>
        <end position="159"/>
    </location>
</feature>
<feature type="binding site" evidence="1">
    <location>
        <position position="76"/>
    </location>
    <ligand>
        <name>S-adenosyl-L-methionine</name>
        <dbReference type="ChEBI" id="CHEBI:59789"/>
    </ligand>
</feature>
<feature type="binding site" evidence="1">
    <location>
        <position position="107"/>
    </location>
    <ligand>
        <name>S-adenosyl-L-methionine</name>
        <dbReference type="ChEBI" id="CHEBI:59789"/>
    </ligand>
</feature>
<feature type="binding site" evidence="1">
    <location>
        <begin position="126"/>
        <end position="131"/>
    </location>
    <ligand>
        <name>S-adenosyl-L-methionine</name>
        <dbReference type="ChEBI" id="CHEBI:59789"/>
    </ligand>
</feature>
<organism>
    <name type="scientific">Cupriavidus metallidurans (strain ATCC 43123 / DSM 2839 / NBRC 102507 / CH34)</name>
    <name type="common">Ralstonia metallidurans</name>
    <dbReference type="NCBI Taxonomy" id="266264"/>
    <lineage>
        <taxon>Bacteria</taxon>
        <taxon>Pseudomonadati</taxon>
        <taxon>Pseudomonadota</taxon>
        <taxon>Betaproteobacteria</taxon>
        <taxon>Burkholderiales</taxon>
        <taxon>Burkholderiaceae</taxon>
        <taxon>Cupriavidus</taxon>
    </lineage>
</organism>
<keyword id="KW-0963">Cytoplasm</keyword>
<keyword id="KW-0489">Methyltransferase</keyword>
<keyword id="KW-1185">Reference proteome</keyword>
<keyword id="KW-0698">rRNA processing</keyword>
<keyword id="KW-0949">S-adenosyl-L-methionine</keyword>
<keyword id="KW-0808">Transferase</keyword>
<sequence>MQLAIVAVGHKMPAWIETGFNEYTKRMPPELRIELREVKPETRSSSNNAATVMQREAARIEAVLGSLSKQCRIVALDERGKDWTTVQLAEQLTGWQREGGDVAFLIGGADGLDPALKARAHTLLRISSLTLPHGMVRVLLAEQLYRAWSVTQNHPYHRA</sequence>
<comment type="function">
    <text evidence="1">Specifically methylates the pseudouridine at position 1915 (m3Psi1915) in 23S rRNA.</text>
</comment>
<comment type="catalytic activity">
    <reaction evidence="1">
        <text>pseudouridine(1915) in 23S rRNA + S-adenosyl-L-methionine = N(3)-methylpseudouridine(1915) in 23S rRNA + S-adenosyl-L-homocysteine + H(+)</text>
        <dbReference type="Rhea" id="RHEA:42752"/>
        <dbReference type="Rhea" id="RHEA-COMP:10221"/>
        <dbReference type="Rhea" id="RHEA-COMP:10222"/>
        <dbReference type="ChEBI" id="CHEBI:15378"/>
        <dbReference type="ChEBI" id="CHEBI:57856"/>
        <dbReference type="ChEBI" id="CHEBI:59789"/>
        <dbReference type="ChEBI" id="CHEBI:65314"/>
        <dbReference type="ChEBI" id="CHEBI:74486"/>
        <dbReference type="EC" id="2.1.1.177"/>
    </reaction>
</comment>
<comment type="subunit">
    <text evidence="1">Homodimer.</text>
</comment>
<comment type="subcellular location">
    <subcellularLocation>
        <location evidence="1">Cytoplasm</location>
    </subcellularLocation>
</comment>
<comment type="similarity">
    <text evidence="1">Belongs to the RNA methyltransferase RlmH family.</text>
</comment>
<name>RLMH_CUPMC</name>